<feature type="chain" id="PRO_0000271887" description="Putative uncharacterized protein YjgW">
    <location>
        <begin position="1"/>
        <end position="111"/>
    </location>
</feature>
<name>YJGW_ECOLI</name>
<gene>
    <name type="primary">yjgW</name>
    <name type="ordered locus">b4274</name>
    <name type="ordered locus">JW4233</name>
</gene>
<protein>
    <recommendedName>
        <fullName>Putative uncharacterized protein YjgW</fullName>
    </recommendedName>
</protein>
<evidence type="ECO:0000305" key="1"/>
<proteinExistence type="uncertain"/>
<sequence>MIRKNKWLRFQTVCRYIPLSLKNHNRLVIFVCQRIEWRYIFSTNTGHPLKNTCEMTGTDFSTDGLMRRYVTGGNNQWHTVASLHMTIMMNRIGTVADRQPKARKVKHGEMT</sequence>
<dbReference type="EMBL" id="U14003">
    <property type="protein sequence ID" value="AAA97170.1"/>
    <property type="molecule type" value="Genomic_DNA"/>
</dbReference>
<dbReference type="EMBL" id="U00096">
    <property type="status" value="NOT_ANNOTATED_CDS"/>
    <property type="molecule type" value="Genomic_DNA"/>
</dbReference>
<dbReference type="EMBL" id="AP009048">
    <property type="protein sequence ID" value="BAE78270.1"/>
    <property type="molecule type" value="Genomic_DNA"/>
</dbReference>
<dbReference type="PIR" id="S56499">
    <property type="entry name" value="S56499"/>
</dbReference>
<dbReference type="BioGRID" id="4261462">
    <property type="interactions" value="279"/>
</dbReference>
<dbReference type="FunCoup" id="Q9Z3A0">
    <property type="interactions" value="9"/>
</dbReference>
<dbReference type="KEGG" id="ecj:JW4233"/>
<dbReference type="HOGENOM" id="CLU_2154517_0_0_6"/>
<dbReference type="InParanoid" id="Q9Z3A0"/>
<dbReference type="Proteomes" id="UP000000625">
    <property type="component" value="Chromosome"/>
</dbReference>
<reference key="1">
    <citation type="journal article" date="1995" name="Nucleic Acids Res.">
        <title>Analysis of the Escherichia coli genome VI: DNA sequence of the region from 92.8 through 100 minutes.</title>
        <authorList>
            <person name="Burland V.D."/>
            <person name="Plunkett G. III"/>
            <person name="Sofia H.J."/>
            <person name="Daniels D.L."/>
            <person name="Blattner F.R."/>
        </authorList>
    </citation>
    <scope>NUCLEOTIDE SEQUENCE [LARGE SCALE GENOMIC DNA]</scope>
    <source>
        <strain>K12 / MG1655 / ATCC 47076</strain>
    </source>
</reference>
<reference key="2">
    <citation type="journal article" date="1997" name="Science">
        <title>The complete genome sequence of Escherichia coli K-12.</title>
        <authorList>
            <person name="Blattner F.R."/>
            <person name="Plunkett G. III"/>
            <person name="Bloch C.A."/>
            <person name="Perna N.T."/>
            <person name="Burland V."/>
            <person name="Riley M."/>
            <person name="Collado-Vides J."/>
            <person name="Glasner J.D."/>
            <person name="Rode C.K."/>
            <person name="Mayhew G.F."/>
            <person name="Gregor J."/>
            <person name="Davis N.W."/>
            <person name="Kirkpatrick H.A."/>
            <person name="Goeden M.A."/>
            <person name="Rose D.J."/>
            <person name="Mau B."/>
            <person name="Shao Y."/>
        </authorList>
    </citation>
    <scope>NUCLEOTIDE SEQUENCE [LARGE SCALE GENOMIC DNA]</scope>
    <source>
        <strain>K12 / MG1655 / ATCC 47076</strain>
    </source>
</reference>
<reference key="3">
    <citation type="journal article" date="2006" name="Mol. Syst. Biol.">
        <title>Highly accurate genome sequences of Escherichia coli K-12 strains MG1655 and W3110.</title>
        <authorList>
            <person name="Hayashi K."/>
            <person name="Morooka N."/>
            <person name="Yamamoto Y."/>
            <person name="Fujita K."/>
            <person name="Isono K."/>
            <person name="Choi S."/>
            <person name="Ohtsubo E."/>
            <person name="Baba T."/>
            <person name="Wanner B.L."/>
            <person name="Mori H."/>
            <person name="Horiuchi T."/>
        </authorList>
    </citation>
    <scope>NUCLEOTIDE SEQUENCE [LARGE SCALE GENOMIC DNA]</scope>
    <source>
        <strain>K12 / W3110 / ATCC 27325 / DSM 5911</strain>
    </source>
</reference>
<keyword id="KW-1185">Reference proteome</keyword>
<organism>
    <name type="scientific">Escherichia coli (strain K12)</name>
    <dbReference type="NCBI Taxonomy" id="83333"/>
    <lineage>
        <taxon>Bacteria</taxon>
        <taxon>Pseudomonadati</taxon>
        <taxon>Pseudomonadota</taxon>
        <taxon>Gammaproteobacteria</taxon>
        <taxon>Enterobacterales</taxon>
        <taxon>Enterobacteriaceae</taxon>
        <taxon>Escherichia</taxon>
    </lineage>
</organism>
<accession>Q9Z3A0</accession>
<accession>Q2M636</accession>
<accession>Q79D59</accession>
<comment type="caution">
    <text evidence="1">Could be the product of a pseudogene.</text>
</comment>